<sequence>MLKKRYLVLEDGSYYEGYPIGSDQLTLGEIVFNTAMTGYQETISDPSYTGQIITFTYPLIGNYGINRDDFEALVPTLNGVVVKEASRQPSNFRKQKTFHEVLQEYDIPGISGVDTRSITRKIRNNGVLKAGFTDEKSEIDSMIAKLQSVELPRNEVTTVSTKSPYVSTGYGLSVVLVDFGKKQNIVRELNARGCNVTVVPYDTSAEAIIRMSPDGVMLSNGPGDPEEVHVAVEMIKGILGKIPFFGICLGHQLFALSQGATSFKMKFGHRGANHPVKDLKTGKIALTSQNHGYAIDKASLKNTDLEVTHIAINDDTVEGLRHKSLPAFSVQYHPEACPGPSDSNYLFDEFIDMINEYKTKELTNNA</sequence>
<feature type="chain" id="PRO_0000112324" description="Carbamoyl phosphate synthase small chain">
    <location>
        <begin position="1"/>
        <end position="366"/>
    </location>
</feature>
<feature type="domain" description="Glutamine amidotransferase type-1" evidence="1">
    <location>
        <begin position="173"/>
        <end position="360"/>
    </location>
</feature>
<feature type="region of interest" description="CPSase" evidence="1">
    <location>
        <begin position="1"/>
        <end position="170"/>
    </location>
</feature>
<feature type="active site" description="Nucleophile" evidence="1">
    <location>
        <position position="248"/>
    </location>
</feature>
<feature type="active site" evidence="1">
    <location>
        <position position="333"/>
    </location>
</feature>
<feature type="active site" evidence="1">
    <location>
        <position position="335"/>
    </location>
</feature>
<feature type="binding site" evidence="1">
    <location>
        <position position="47"/>
    </location>
    <ligand>
        <name>L-glutamine</name>
        <dbReference type="ChEBI" id="CHEBI:58359"/>
    </ligand>
</feature>
<feature type="binding site" evidence="1">
    <location>
        <position position="221"/>
    </location>
    <ligand>
        <name>L-glutamine</name>
        <dbReference type="ChEBI" id="CHEBI:58359"/>
    </ligand>
</feature>
<feature type="binding site" evidence="1">
    <location>
        <position position="223"/>
    </location>
    <ligand>
        <name>L-glutamine</name>
        <dbReference type="ChEBI" id="CHEBI:58359"/>
    </ligand>
</feature>
<feature type="binding site" evidence="1">
    <location>
        <position position="249"/>
    </location>
    <ligand>
        <name>L-glutamine</name>
        <dbReference type="ChEBI" id="CHEBI:58359"/>
    </ligand>
</feature>
<feature type="binding site" evidence="1">
    <location>
        <position position="252"/>
    </location>
    <ligand>
        <name>L-glutamine</name>
        <dbReference type="ChEBI" id="CHEBI:58359"/>
    </ligand>
</feature>
<feature type="binding site" evidence="1">
    <location>
        <position position="290"/>
    </location>
    <ligand>
        <name>L-glutamine</name>
        <dbReference type="ChEBI" id="CHEBI:58359"/>
    </ligand>
</feature>
<feature type="binding site" evidence="1">
    <location>
        <position position="292"/>
    </location>
    <ligand>
        <name>L-glutamine</name>
        <dbReference type="ChEBI" id="CHEBI:58359"/>
    </ligand>
</feature>
<feature type="binding site" evidence="1">
    <location>
        <position position="293"/>
    </location>
    <ligand>
        <name>L-glutamine</name>
        <dbReference type="ChEBI" id="CHEBI:58359"/>
    </ligand>
</feature>
<comment type="function">
    <text evidence="1">Small subunit of the glutamine-dependent carbamoyl phosphate synthetase (CPSase). CPSase catalyzes the formation of carbamoyl phosphate from the ammonia moiety of glutamine, carbonate, and phosphate donated by ATP, constituting the first step of 2 biosynthetic pathways, one leading to arginine and/or urea and the other to pyrimidine nucleotides. The small subunit (glutamine amidotransferase) binds and cleaves glutamine to supply the large subunit with the substrate ammonia.</text>
</comment>
<comment type="catalytic activity">
    <reaction evidence="1">
        <text>hydrogencarbonate + L-glutamine + 2 ATP + H2O = carbamoyl phosphate + L-glutamate + 2 ADP + phosphate + 2 H(+)</text>
        <dbReference type="Rhea" id="RHEA:18633"/>
        <dbReference type="ChEBI" id="CHEBI:15377"/>
        <dbReference type="ChEBI" id="CHEBI:15378"/>
        <dbReference type="ChEBI" id="CHEBI:17544"/>
        <dbReference type="ChEBI" id="CHEBI:29985"/>
        <dbReference type="ChEBI" id="CHEBI:30616"/>
        <dbReference type="ChEBI" id="CHEBI:43474"/>
        <dbReference type="ChEBI" id="CHEBI:58228"/>
        <dbReference type="ChEBI" id="CHEBI:58359"/>
        <dbReference type="ChEBI" id="CHEBI:456216"/>
        <dbReference type="EC" id="6.3.5.5"/>
    </reaction>
</comment>
<comment type="catalytic activity">
    <molecule>Carbamoyl phosphate synthase small chain</molecule>
    <reaction evidence="1">
        <text>L-glutamine + H2O = L-glutamate + NH4(+)</text>
        <dbReference type="Rhea" id="RHEA:15889"/>
        <dbReference type="ChEBI" id="CHEBI:15377"/>
        <dbReference type="ChEBI" id="CHEBI:28938"/>
        <dbReference type="ChEBI" id="CHEBI:29985"/>
        <dbReference type="ChEBI" id="CHEBI:58359"/>
    </reaction>
</comment>
<comment type="pathway">
    <text evidence="1">Amino-acid biosynthesis; L-arginine biosynthesis; carbamoyl phosphate from bicarbonate: step 1/1.</text>
</comment>
<comment type="pathway">
    <text evidence="1">Pyrimidine metabolism; UMP biosynthesis via de novo pathway; (S)-dihydroorotate from bicarbonate: step 1/3.</text>
</comment>
<comment type="subunit">
    <text evidence="1">Composed of two chains; the small (or glutamine) chain promotes the hydrolysis of glutamine to ammonia, which is used by the large (or ammonia) chain to synthesize carbamoyl phosphate. Tetramer of heterodimers (alpha,beta)4.</text>
</comment>
<comment type="similarity">
    <text evidence="1">Belongs to the CarA family.</text>
</comment>
<evidence type="ECO:0000255" key="1">
    <source>
        <dbReference type="HAMAP-Rule" id="MF_01209"/>
    </source>
</evidence>
<accession>Q49WY3</accession>
<gene>
    <name evidence="1" type="primary">carA</name>
    <name type="ordered locus">SSP1570</name>
</gene>
<keyword id="KW-0028">Amino-acid biosynthesis</keyword>
<keyword id="KW-0055">Arginine biosynthesis</keyword>
<keyword id="KW-0067">ATP-binding</keyword>
<keyword id="KW-0315">Glutamine amidotransferase</keyword>
<keyword id="KW-0436">Ligase</keyword>
<keyword id="KW-0547">Nucleotide-binding</keyword>
<keyword id="KW-0665">Pyrimidine biosynthesis</keyword>
<keyword id="KW-1185">Reference proteome</keyword>
<reference key="1">
    <citation type="journal article" date="2005" name="Proc. Natl. Acad. Sci. U.S.A.">
        <title>Whole genome sequence of Staphylococcus saprophyticus reveals the pathogenesis of uncomplicated urinary tract infection.</title>
        <authorList>
            <person name="Kuroda M."/>
            <person name="Yamashita A."/>
            <person name="Hirakawa H."/>
            <person name="Kumano M."/>
            <person name="Morikawa K."/>
            <person name="Higashide M."/>
            <person name="Maruyama A."/>
            <person name="Inose Y."/>
            <person name="Matoba K."/>
            <person name="Toh H."/>
            <person name="Kuhara S."/>
            <person name="Hattori M."/>
            <person name="Ohta T."/>
        </authorList>
    </citation>
    <scope>NUCLEOTIDE SEQUENCE [LARGE SCALE GENOMIC DNA]</scope>
    <source>
        <strain>ATCC 15305 / DSM 20229 / NCIMB 8711 / NCTC 7292 / S-41</strain>
    </source>
</reference>
<name>CARA_STAS1</name>
<protein>
    <recommendedName>
        <fullName evidence="1">Carbamoyl phosphate synthase small chain</fullName>
        <ecNumber evidence="1">6.3.5.5</ecNumber>
    </recommendedName>
    <alternativeName>
        <fullName evidence="1">Carbamoyl phosphate synthetase glutamine chain</fullName>
    </alternativeName>
</protein>
<organism>
    <name type="scientific">Staphylococcus saprophyticus subsp. saprophyticus (strain ATCC 15305 / DSM 20229 / NCIMB 8711 / NCTC 7292 / S-41)</name>
    <dbReference type="NCBI Taxonomy" id="342451"/>
    <lineage>
        <taxon>Bacteria</taxon>
        <taxon>Bacillati</taxon>
        <taxon>Bacillota</taxon>
        <taxon>Bacilli</taxon>
        <taxon>Bacillales</taxon>
        <taxon>Staphylococcaceae</taxon>
        <taxon>Staphylococcus</taxon>
    </lineage>
</organism>
<dbReference type="EC" id="6.3.5.5" evidence="1"/>
<dbReference type="EMBL" id="AP008934">
    <property type="protein sequence ID" value="BAE18715.1"/>
    <property type="molecule type" value="Genomic_DNA"/>
</dbReference>
<dbReference type="RefSeq" id="WP_011303312.1">
    <property type="nucleotide sequence ID" value="NZ_MTGA01000034.1"/>
</dbReference>
<dbReference type="SMR" id="Q49WY3"/>
<dbReference type="MEROPS" id="C26.963"/>
<dbReference type="GeneID" id="3615314"/>
<dbReference type="KEGG" id="ssp:SSP1570"/>
<dbReference type="PATRIC" id="fig|342451.11.peg.1572"/>
<dbReference type="eggNOG" id="COG0505">
    <property type="taxonomic scope" value="Bacteria"/>
</dbReference>
<dbReference type="HOGENOM" id="CLU_035901_2_1_9"/>
<dbReference type="OrthoDB" id="9804328at2"/>
<dbReference type="UniPathway" id="UPA00068">
    <property type="reaction ID" value="UER00171"/>
</dbReference>
<dbReference type="UniPathway" id="UPA00070">
    <property type="reaction ID" value="UER00115"/>
</dbReference>
<dbReference type="Proteomes" id="UP000006371">
    <property type="component" value="Chromosome"/>
</dbReference>
<dbReference type="GO" id="GO:0005524">
    <property type="term" value="F:ATP binding"/>
    <property type="evidence" value="ECO:0007669"/>
    <property type="project" value="UniProtKB-UniRule"/>
</dbReference>
<dbReference type="GO" id="GO:0004088">
    <property type="term" value="F:carbamoyl-phosphate synthase (glutamine-hydrolyzing) activity"/>
    <property type="evidence" value="ECO:0007669"/>
    <property type="project" value="UniProtKB-UniRule"/>
</dbReference>
<dbReference type="GO" id="GO:0004359">
    <property type="term" value="F:glutaminase activity"/>
    <property type="evidence" value="ECO:0007669"/>
    <property type="project" value="RHEA"/>
</dbReference>
<dbReference type="GO" id="GO:0006207">
    <property type="term" value="P:'de novo' pyrimidine nucleobase biosynthetic process"/>
    <property type="evidence" value="ECO:0007669"/>
    <property type="project" value="InterPro"/>
</dbReference>
<dbReference type="GO" id="GO:0044205">
    <property type="term" value="P:'de novo' UMP biosynthetic process"/>
    <property type="evidence" value="ECO:0007669"/>
    <property type="project" value="UniProtKB-UniRule"/>
</dbReference>
<dbReference type="GO" id="GO:0006541">
    <property type="term" value="P:glutamine metabolic process"/>
    <property type="evidence" value="ECO:0007669"/>
    <property type="project" value="InterPro"/>
</dbReference>
<dbReference type="GO" id="GO:0006526">
    <property type="term" value="P:L-arginine biosynthetic process"/>
    <property type="evidence" value="ECO:0007669"/>
    <property type="project" value="UniProtKB-UniRule"/>
</dbReference>
<dbReference type="CDD" id="cd01744">
    <property type="entry name" value="GATase1_CPSase"/>
    <property type="match status" value="1"/>
</dbReference>
<dbReference type="FunFam" id="3.40.50.880:FF:000029">
    <property type="entry name" value="Carbamoyl-phosphate synthase small chain"/>
    <property type="match status" value="1"/>
</dbReference>
<dbReference type="FunFam" id="3.50.30.20:FF:000001">
    <property type="entry name" value="Carbamoyl-phosphate synthase small chain"/>
    <property type="match status" value="1"/>
</dbReference>
<dbReference type="Gene3D" id="3.40.50.880">
    <property type="match status" value="1"/>
</dbReference>
<dbReference type="Gene3D" id="3.50.30.20">
    <property type="entry name" value="Carbamoyl-phosphate synthase small subunit, N-terminal domain"/>
    <property type="match status" value="1"/>
</dbReference>
<dbReference type="HAMAP" id="MF_01209">
    <property type="entry name" value="CPSase_S_chain"/>
    <property type="match status" value="1"/>
</dbReference>
<dbReference type="InterPro" id="IPR050472">
    <property type="entry name" value="Anth_synth/Amidotransfase"/>
</dbReference>
<dbReference type="InterPro" id="IPR006274">
    <property type="entry name" value="CarbamoylP_synth_ssu"/>
</dbReference>
<dbReference type="InterPro" id="IPR002474">
    <property type="entry name" value="CarbamoylP_synth_ssu_N"/>
</dbReference>
<dbReference type="InterPro" id="IPR036480">
    <property type="entry name" value="CarbP_synth_ssu_N_sf"/>
</dbReference>
<dbReference type="InterPro" id="IPR029062">
    <property type="entry name" value="Class_I_gatase-like"/>
</dbReference>
<dbReference type="InterPro" id="IPR035686">
    <property type="entry name" value="CPSase_GATase1"/>
</dbReference>
<dbReference type="InterPro" id="IPR017926">
    <property type="entry name" value="GATASE"/>
</dbReference>
<dbReference type="NCBIfam" id="TIGR01368">
    <property type="entry name" value="CPSaseIIsmall"/>
    <property type="match status" value="1"/>
</dbReference>
<dbReference type="NCBIfam" id="NF009475">
    <property type="entry name" value="PRK12838.1"/>
    <property type="match status" value="1"/>
</dbReference>
<dbReference type="PANTHER" id="PTHR43418:SF7">
    <property type="entry name" value="CARBAMOYL-PHOSPHATE SYNTHASE SMALL CHAIN"/>
    <property type="match status" value="1"/>
</dbReference>
<dbReference type="PANTHER" id="PTHR43418">
    <property type="entry name" value="MULTIFUNCTIONAL TRYPTOPHAN BIOSYNTHESIS PROTEIN-RELATED"/>
    <property type="match status" value="1"/>
</dbReference>
<dbReference type="Pfam" id="PF00988">
    <property type="entry name" value="CPSase_sm_chain"/>
    <property type="match status" value="1"/>
</dbReference>
<dbReference type="Pfam" id="PF00117">
    <property type="entry name" value="GATase"/>
    <property type="match status" value="1"/>
</dbReference>
<dbReference type="PRINTS" id="PR00097">
    <property type="entry name" value="ANTSNTHASEII"/>
</dbReference>
<dbReference type="PRINTS" id="PR00099">
    <property type="entry name" value="CPSGATASE"/>
</dbReference>
<dbReference type="PRINTS" id="PR00096">
    <property type="entry name" value="GATASE"/>
</dbReference>
<dbReference type="SMART" id="SM01097">
    <property type="entry name" value="CPSase_sm_chain"/>
    <property type="match status" value="1"/>
</dbReference>
<dbReference type="SUPFAM" id="SSF52021">
    <property type="entry name" value="Carbamoyl phosphate synthetase, small subunit N-terminal domain"/>
    <property type="match status" value="1"/>
</dbReference>
<dbReference type="SUPFAM" id="SSF52317">
    <property type="entry name" value="Class I glutamine amidotransferase-like"/>
    <property type="match status" value="1"/>
</dbReference>
<dbReference type="PROSITE" id="PS51273">
    <property type="entry name" value="GATASE_TYPE_1"/>
    <property type="match status" value="1"/>
</dbReference>
<proteinExistence type="inferred from homology"/>